<dbReference type="EMBL" id="CP001638">
    <property type="protein sequence ID" value="ACS23946.1"/>
    <property type="molecule type" value="Genomic_DNA"/>
</dbReference>
<dbReference type="SMR" id="C5D8T9"/>
<dbReference type="STRING" id="471223.GWCH70_1086"/>
<dbReference type="KEGG" id="gwc:GWCH70_1086"/>
<dbReference type="eggNOG" id="COG2739">
    <property type="taxonomic scope" value="Bacteria"/>
</dbReference>
<dbReference type="HOGENOM" id="CLU_129218_1_0_9"/>
<dbReference type="OrthoDB" id="6392at2"/>
<dbReference type="Gene3D" id="1.10.10.10">
    <property type="entry name" value="Winged helix-like DNA-binding domain superfamily/Winged helix DNA-binding domain"/>
    <property type="match status" value="1"/>
</dbReference>
<dbReference type="HAMAP" id="MF_00245">
    <property type="entry name" value="UPF0122"/>
    <property type="match status" value="1"/>
</dbReference>
<dbReference type="InterPro" id="IPR013324">
    <property type="entry name" value="RNA_pol_sigma_r3/r4-like"/>
</dbReference>
<dbReference type="InterPro" id="IPR007394">
    <property type="entry name" value="UPF0122"/>
</dbReference>
<dbReference type="InterPro" id="IPR054831">
    <property type="entry name" value="UPF0122_fam_protein"/>
</dbReference>
<dbReference type="InterPro" id="IPR036388">
    <property type="entry name" value="WH-like_DNA-bd_sf"/>
</dbReference>
<dbReference type="NCBIfam" id="NF001068">
    <property type="entry name" value="PRK00118.1-4"/>
    <property type="match status" value="1"/>
</dbReference>
<dbReference type="NCBIfam" id="NF001070">
    <property type="entry name" value="PRK00118.1-6"/>
    <property type="match status" value="1"/>
</dbReference>
<dbReference type="NCBIfam" id="NF045758">
    <property type="entry name" value="YlxM"/>
    <property type="match status" value="1"/>
</dbReference>
<dbReference type="PANTHER" id="PTHR40083">
    <property type="entry name" value="UPF0122 PROTEIN CBO2450/CLC_2298"/>
    <property type="match status" value="1"/>
</dbReference>
<dbReference type="PANTHER" id="PTHR40083:SF1">
    <property type="entry name" value="UPF0122 PROTEIN YLXM"/>
    <property type="match status" value="1"/>
</dbReference>
<dbReference type="Pfam" id="PF04297">
    <property type="entry name" value="UPF0122"/>
    <property type="match status" value="1"/>
</dbReference>
<dbReference type="SUPFAM" id="SSF88659">
    <property type="entry name" value="Sigma3 and sigma4 domains of RNA polymerase sigma factors"/>
    <property type="match status" value="1"/>
</dbReference>
<evidence type="ECO:0000255" key="1">
    <source>
        <dbReference type="HAMAP-Rule" id="MF_00245"/>
    </source>
</evidence>
<name>Y1086_GEOSW</name>
<accession>C5D8T9</accession>
<organism>
    <name type="scientific">Geobacillus sp. (strain WCH70)</name>
    <dbReference type="NCBI Taxonomy" id="471223"/>
    <lineage>
        <taxon>Bacteria</taxon>
        <taxon>Bacillati</taxon>
        <taxon>Bacillota</taxon>
        <taxon>Bacilli</taxon>
        <taxon>Bacillales</taxon>
        <taxon>Anoxybacillaceae</taxon>
        <taxon>Geobacillus</taxon>
    </lineage>
</organism>
<comment type="function">
    <text evidence="1">Might take part in the signal recognition particle (SRP) pathway. This is inferred from the conservation of its genetic proximity to ftsY/ffh. May be a regulatory protein.</text>
</comment>
<comment type="similarity">
    <text evidence="1">Belongs to the UPF0122 family.</text>
</comment>
<reference key="1">
    <citation type="submission" date="2009-06" db="EMBL/GenBank/DDBJ databases">
        <title>Complete sequence of chromosome of Geopacillus sp. WCH70.</title>
        <authorList>
            <consortium name="US DOE Joint Genome Institute"/>
            <person name="Lucas S."/>
            <person name="Copeland A."/>
            <person name="Lapidus A."/>
            <person name="Glavina del Rio T."/>
            <person name="Dalin E."/>
            <person name="Tice H."/>
            <person name="Bruce D."/>
            <person name="Goodwin L."/>
            <person name="Pitluck S."/>
            <person name="Chertkov O."/>
            <person name="Brettin T."/>
            <person name="Detter J.C."/>
            <person name="Han C."/>
            <person name="Larimer F."/>
            <person name="Land M."/>
            <person name="Hauser L."/>
            <person name="Kyrpides N."/>
            <person name="Mikhailova N."/>
            <person name="Brumm P."/>
            <person name="Mead D.A."/>
            <person name="Richardson P."/>
        </authorList>
    </citation>
    <scope>NUCLEOTIDE SEQUENCE [LARGE SCALE GENOMIC DNA]</scope>
    <source>
        <strain>WCH70</strain>
    </source>
</reference>
<proteinExistence type="inferred from homology"/>
<sequence>MLEKTMRMNYLYDFYQALLTPKQRSYMSLYYLDDYSLGEIAQQYEVSRQAVYDNIKRTEAMLEEYEKKLSLFQKFQKRKQLMNQLKDYVLQKYGEDKQLFDMIKELEELE</sequence>
<feature type="chain" id="PRO_1000204492" description="UPF0122 protein GWCH70_1086">
    <location>
        <begin position="1"/>
        <end position="110"/>
    </location>
</feature>
<protein>
    <recommendedName>
        <fullName evidence="1">UPF0122 protein GWCH70_1086</fullName>
    </recommendedName>
</protein>
<gene>
    <name type="ordered locus">GWCH70_1086</name>
</gene>